<gene>
    <name evidence="1" type="primary">ycf3</name>
    <name type="ordered locus">Tery_4580</name>
</gene>
<dbReference type="EMBL" id="CP000393">
    <property type="protein sequence ID" value="ABG53556.1"/>
    <property type="status" value="ALT_INIT"/>
    <property type="molecule type" value="Genomic_DNA"/>
</dbReference>
<dbReference type="RefSeq" id="WP_044137005.1">
    <property type="nucleotide sequence ID" value="NC_008312.1"/>
</dbReference>
<dbReference type="SMR" id="Q10W18"/>
<dbReference type="STRING" id="203124.Tery_4580"/>
<dbReference type="KEGG" id="ter:Tery_4580"/>
<dbReference type="eggNOG" id="COG0457">
    <property type="taxonomic scope" value="Bacteria"/>
</dbReference>
<dbReference type="HOGENOM" id="CLU_141248_0_0_3"/>
<dbReference type="OrthoDB" id="9429505at2"/>
<dbReference type="GO" id="GO:0031676">
    <property type="term" value="C:plasma membrane-derived thylakoid membrane"/>
    <property type="evidence" value="ECO:0007669"/>
    <property type="project" value="UniProtKB-SubCell"/>
</dbReference>
<dbReference type="GO" id="GO:0015979">
    <property type="term" value="P:photosynthesis"/>
    <property type="evidence" value="ECO:0007669"/>
    <property type="project" value="UniProtKB-UniRule"/>
</dbReference>
<dbReference type="Gene3D" id="1.25.40.10">
    <property type="entry name" value="Tetratricopeptide repeat domain"/>
    <property type="match status" value="1"/>
</dbReference>
<dbReference type="HAMAP" id="MF_00439">
    <property type="entry name" value="Ycf3"/>
    <property type="match status" value="1"/>
</dbReference>
<dbReference type="InterPro" id="IPR022818">
    <property type="entry name" value="PSI_Ycf3_assembly"/>
</dbReference>
<dbReference type="InterPro" id="IPR011990">
    <property type="entry name" value="TPR-like_helical_dom_sf"/>
</dbReference>
<dbReference type="InterPro" id="IPR019734">
    <property type="entry name" value="TPR_rpt"/>
</dbReference>
<dbReference type="InterPro" id="IPR051685">
    <property type="entry name" value="Ycf3/AcsC/BcsC/TPR_MFPF"/>
</dbReference>
<dbReference type="NCBIfam" id="NF002725">
    <property type="entry name" value="PRK02603.1"/>
    <property type="match status" value="1"/>
</dbReference>
<dbReference type="PANTHER" id="PTHR44943">
    <property type="entry name" value="CELLULOSE SYNTHASE OPERON PROTEIN C"/>
    <property type="match status" value="1"/>
</dbReference>
<dbReference type="PANTHER" id="PTHR44943:SF9">
    <property type="entry name" value="TPR-REPEAT-CONTAINING PROTEIN"/>
    <property type="match status" value="1"/>
</dbReference>
<dbReference type="Pfam" id="PF00515">
    <property type="entry name" value="TPR_1"/>
    <property type="match status" value="1"/>
</dbReference>
<dbReference type="SMART" id="SM00028">
    <property type="entry name" value="TPR"/>
    <property type="match status" value="3"/>
</dbReference>
<dbReference type="SUPFAM" id="SSF48452">
    <property type="entry name" value="TPR-like"/>
    <property type="match status" value="1"/>
</dbReference>
<dbReference type="PROSITE" id="PS50005">
    <property type="entry name" value="TPR"/>
    <property type="match status" value="3"/>
</dbReference>
<dbReference type="PROSITE" id="PS50293">
    <property type="entry name" value="TPR_REGION"/>
    <property type="match status" value="1"/>
</dbReference>
<evidence type="ECO:0000255" key="1">
    <source>
        <dbReference type="HAMAP-Rule" id="MF_00439"/>
    </source>
</evidence>
<evidence type="ECO:0000305" key="2"/>
<feature type="chain" id="PRO_0000325048" description="Photosystem I assembly protein Ycf3">
    <location>
        <begin position="1"/>
        <end position="173"/>
    </location>
</feature>
<feature type="repeat" description="TPR 1">
    <location>
        <begin position="35"/>
        <end position="68"/>
    </location>
</feature>
<feature type="repeat" description="TPR 2">
    <location>
        <begin position="72"/>
        <end position="105"/>
    </location>
</feature>
<feature type="repeat" description="TPR 3">
    <location>
        <begin position="120"/>
        <end position="153"/>
    </location>
</feature>
<comment type="function">
    <text evidence="1">Essential for the assembly of the photosystem I (PSI) complex. May act as a chaperone-like factor to guide the assembly of the PSI subunits.</text>
</comment>
<comment type="subcellular location">
    <subcellularLocation>
        <location evidence="1">Cellular thylakoid membrane</location>
        <topology evidence="1">Peripheral membrane protein</topology>
    </subcellularLocation>
</comment>
<comment type="similarity">
    <text evidence="1">Belongs to the Ycf3 family.</text>
</comment>
<comment type="sequence caution" evidence="2">
    <conflict type="erroneous initiation">
        <sequence resource="EMBL-CDS" id="ABG53556"/>
    </conflict>
</comment>
<keyword id="KW-0472">Membrane</keyword>
<keyword id="KW-0602">Photosynthesis</keyword>
<keyword id="KW-0677">Repeat</keyword>
<keyword id="KW-0793">Thylakoid</keyword>
<keyword id="KW-0802">TPR repeat</keyword>
<protein>
    <recommendedName>
        <fullName evidence="1">Photosystem I assembly protein Ycf3</fullName>
    </recommendedName>
</protein>
<proteinExistence type="inferred from homology"/>
<sequence length="173" mass="19963">MPRTQRNDNFIDKSFTVMADLILKLLPTNNQAKEAFAYYRDGMSAQADGEYAEALENYYEALNLEDDPNDRSYILYNIGLIHASNGEHDQALEYYHQALENNPRMPQALNNIAVIFHYRGEKAKETGNSRDANSYFDQAAEYWKQAISLAPNNYIEAQNWLKTTGRSNKEVFF</sequence>
<organism>
    <name type="scientific">Trichodesmium erythraeum (strain IMS101)</name>
    <dbReference type="NCBI Taxonomy" id="203124"/>
    <lineage>
        <taxon>Bacteria</taxon>
        <taxon>Bacillati</taxon>
        <taxon>Cyanobacteriota</taxon>
        <taxon>Cyanophyceae</taxon>
        <taxon>Oscillatoriophycideae</taxon>
        <taxon>Oscillatoriales</taxon>
        <taxon>Microcoleaceae</taxon>
        <taxon>Trichodesmium</taxon>
    </lineage>
</organism>
<accession>Q10W18</accession>
<reference key="1">
    <citation type="journal article" date="2015" name="Proc. Natl. Acad. Sci. U.S.A.">
        <title>Trichodesmium genome maintains abundant, widespread noncoding DNA in situ, despite oligotrophic lifestyle.</title>
        <authorList>
            <person name="Walworth N."/>
            <person name="Pfreundt U."/>
            <person name="Nelson W.C."/>
            <person name="Mincer T."/>
            <person name="Heidelberg J.F."/>
            <person name="Fu F."/>
            <person name="Waterbury J.B."/>
            <person name="Glavina del Rio T."/>
            <person name="Goodwin L."/>
            <person name="Kyrpides N.C."/>
            <person name="Land M.L."/>
            <person name="Woyke T."/>
            <person name="Hutchins D.A."/>
            <person name="Hess W.R."/>
            <person name="Webb E.A."/>
        </authorList>
    </citation>
    <scope>NUCLEOTIDE SEQUENCE [LARGE SCALE GENOMIC DNA]</scope>
    <source>
        <strain>IMS101</strain>
    </source>
</reference>
<name>YCF3_TRIEI</name>